<comment type="function">
    <text evidence="1">Catalyzes the reversible reaction in which hydroxymethyl group from 5,10-methylenetetrahydrofolate is transferred onto alpha-ketoisovalerate to form ketopantoate.</text>
</comment>
<comment type="catalytic activity">
    <reaction evidence="1">
        <text>3-methyl-2-oxobutanoate + (6R)-5,10-methylene-5,6,7,8-tetrahydrofolate + H2O = 2-dehydropantoate + (6S)-5,6,7,8-tetrahydrofolate</text>
        <dbReference type="Rhea" id="RHEA:11824"/>
        <dbReference type="ChEBI" id="CHEBI:11561"/>
        <dbReference type="ChEBI" id="CHEBI:11851"/>
        <dbReference type="ChEBI" id="CHEBI:15377"/>
        <dbReference type="ChEBI" id="CHEBI:15636"/>
        <dbReference type="ChEBI" id="CHEBI:57453"/>
        <dbReference type="EC" id="2.1.2.11"/>
    </reaction>
</comment>
<comment type="cofactor">
    <cofactor evidence="1">
        <name>Mg(2+)</name>
        <dbReference type="ChEBI" id="CHEBI:18420"/>
    </cofactor>
    <text evidence="1">Binds 1 Mg(2+) ion per subunit.</text>
</comment>
<comment type="pathway">
    <text evidence="1">Cofactor biosynthesis; (R)-pantothenate biosynthesis; (R)-pantoate from 3-methyl-2-oxobutanoate: step 1/2.</text>
</comment>
<comment type="subunit">
    <text evidence="1">Homodecamer; pentamer of dimers.</text>
</comment>
<comment type="subcellular location">
    <subcellularLocation>
        <location evidence="1">Cytoplasm</location>
    </subcellularLocation>
</comment>
<comment type="similarity">
    <text evidence="1">Belongs to the PanB family.</text>
</comment>
<accession>Q65I56</accession>
<accession>Q62TK5</accession>
<sequence>MKTKTDFLKMKQEGEPIVMLTAYDYPAAKLAEQAGVDMILVGDSLGMVVLGLDSTVSVTVADMIHHTKAVKRGAKDTFVVTDMPFMSYHCSLESALKNAAAIVQESGADALKLEGGDGVFETITALTRGGIPVVSHLGLTPQSVGVLGGYKVQGKDEESAGKLIEDSRRCEEAGAMALVLECVPAALAERISKELTIPVIGIGAGAGTDGQVLVYHDVVGHGVSRTPKFVKQYAQIDQPLEQALRGYVEDVRSRVFPEDAHSFRIDQQVLEGLYGGK</sequence>
<protein>
    <recommendedName>
        <fullName evidence="1">3-methyl-2-oxobutanoate hydroxymethyltransferase</fullName>
        <ecNumber evidence="1">2.1.2.11</ecNumber>
    </recommendedName>
    <alternativeName>
        <fullName evidence="1">Ketopantoate hydroxymethyltransferase</fullName>
        <shortName evidence="1">KPHMT</shortName>
    </alternativeName>
</protein>
<proteinExistence type="inferred from homology"/>
<reference key="1">
    <citation type="journal article" date="2004" name="J. Mol. Microbiol. Biotechnol.">
        <title>The complete genome sequence of Bacillus licheniformis DSM13, an organism with great industrial potential.</title>
        <authorList>
            <person name="Veith B."/>
            <person name="Herzberg C."/>
            <person name="Steckel S."/>
            <person name="Feesche J."/>
            <person name="Maurer K.H."/>
            <person name="Ehrenreich P."/>
            <person name="Baeumer S."/>
            <person name="Henne A."/>
            <person name="Liesegang H."/>
            <person name="Merkl R."/>
            <person name="Ehrenreich A."/>
            <person name="Gottschalk G."/>
        </authorList>
    </citation>
    <scope>NUCLEOTIDE SEQUENCE [LARGE SCALE GENOMIC DNA]</scope>
    <source>
        <strain>ATCC 14580 / DSM 13 / JCM 2505 / CCUG 7422 / NBRC 12200 / NCIMB 9375 / NCTC 10341 / NRRL NRS-1264 / Gibson 46</strain>
    </source>
</reference>
<reference key="2">
    <citation type="journal article" date="2004" name="Genome Biol.">
        <title>Complete genome sequence of the industrial bacterium Bacillus licheniformis and comparisons with closely related Bacillus species.</title>
        <authorList>
            <person name="Rey M.W."/>
            <person name="Ramaiya P."/>
            <person name="Nelson B.A."/>
            <person name="Brody-Karpin S.D."/>
            <person name="Zaretsky E.J."/>
            <person name="Tang M."/>
            <person name="Lopez de Leon A."/>
            <person name="Xiang H."/>
            <person name="Gusti V."/>
            <person name="Clausen I.G."/>
            <person name="Olsen P.B."/>
            <person name="Rasmussen M.D."/>
            <person name="Andersen J.T."/>
            <person name="Joergensen P.L."/>
            <person name="Larsen T.S."/>
            <person name="Sorokin A."/>
            <person name="Bolotin A."/>
            <person name="Lapidus A."/>
            <person name="Galleron N."/>
            <person name="Ehrlich S.D."/>
            <person name="Berka R.M."/>
        </authorList>
    </citation>
    <scope>NUCLEOTIDE SEQUENCE [LARGE SCALE GENOMIC DNA]</scope>
    <source>
        <strain>ATCC 14580 / DSM 13 / JCM 2505 / CCUG 7422 / NBRC 12200 / NCIMB 9375 / NCTC 10341 / NRRL NRS-1264 / Gibson 46</strain>
    </source>
</reference>
<organism>
    <name type="scientific">Bacillus licheniformis (strain ATCC 14580 / DSM 13 / JCM 2505 / CCUG 7422 / NBRC 12200 / NCIMB 9375 / NCTC 10341 / NRRL NRS-1264 / Gibson 46)</name>
    <dbReference type="NCBI Taxonomy" id="279010"/>
    <lineage>
        <taxon>Bacteria</taxon>
        <taxon>Bacillati</taxon>
        <taxon>Bacillota</taxon>
        <taxon>Bacilli</taxon>
        <taxon>Bacillales</taxon>
        <taxon>Bacillaceae</taxon>
        <taxon>Bacillus</taxon>
    </lineage>
</organism>
<evidence type="ECO:0000255" key="1">
    <source>
        <dbReference type="HAMAP-Rule" id="MF_00156"/>
    </source>
</evidence>
<name>PANB_BACLD</name>
<dbReference type="EC" id="2.1.2.11" evidence="1"/>
<dbReference type="EMBL" id="CP000002">
    <property type="protein sequence ID" value="AAU23904.1"/>
    <property type="molecule type" value="Genomic_DNA"/>
</dbReference>
<dbReference type="EMBL" id="AE017333">
    <property type="protein sequence ID" value="AAU41258.1"/>
    <property type="molecule type" value="Genomic_DNA"/>
</dbReference>
<dbReference type="RefSeq" id="WP_003182922.1">
    <property type="nucleotide sequence ID" value="NC_006322.1"/>
</dbReference>
<dbReference type="SMR" id="Q65I56"/>
<dbReference type="STRING" id="279010.BL02752"/>
<dbReference type="GeneID" id="92861023"/>
<dbReference type="KEGG" id="bld:BLi02378"/>
<dbReference type="KEGG" id="bli:BL02752"/>
<dbReference type="eggNOG" id="COG0413">
    <property type="taxonomic scope" value="Bacteria"/>
</dbReference>
<dbReference type="HOGENOM" id="CLU_036645_1_0_9"/>
<dbReference type="UniPathway" id="UPA00028">
    <property type="reaction ID" value="UER00003"/>
</dbReference>
<dbReference type="Proteomes" id="UP000000606">
    <property type="component" value="Chromosome"/>
</dbReference>
<dbReference type="Bgee" id="BL02752">
    <property type="expression patterns" value="Expressed in neurula embryo and 3 other cell types or tissues"/>
</dbReference>
<dbReference type="GO" id="GO:0005737">
    <property type="term" value="C:cytoplasm"/>
    <property type="evidence" value="ECO:0007669"/>
    <property type="project" value="UniProtKB-SubCell"/>
</dbReference>
<dbReference type="GO" id="GO:0003864">
    <property type="term" value="F:3-methyl-2-oxobutanoate hydroxymethyltransferase activity"/>
    <property type="evidence" value="ECO:0007669"/>
    <property type="project" value="UniProtKB-UniRule"/>
</dbReference>
<dbReference type="GO" id="GO:0000287">
    <property type="term" value="F:magnesium ion binding"/>
    <property type="evidence" value="ECO:0007669"/>
    <property type="project" value="TreeGrafter"/>
</dbReference>
<dbReference type="GO" id="GO:0015940">
    <property type="term" value="P:pantothenate biosynthetic process"/>
    <property type="evidence" value="ECO:0007669"/>
    <property type="project" value="UniProtKB-UniRule"/>
</dbReference>
<dbReference type="CDD" id="cd06557">
    <property type="entry name" value="KPHMT-like"/>
    <property type="match status" value="1"/>
</dbReference>
<dbReference type="FunFam" id="3.20.20.60:FF:000003">
    <property type="entry name" value="3-methyl-2-oxobutanoate hydroxymethyltransferase"/>
    <property type="match status" value="1"/>
</dbReference>
<dbReference type="Gene3D" id="3.20.20.60">
    <property type="entry name" value="Phosphoenolpyruvate-binding domains"/>
    <property type="match status" value="1"/>
</dbReference>
<dbReference type="HAMAP" id="MF_00156">
    <property type="entry name" value="PanB"/>
    <property type="match status" value="1"/>
</dbReference>
<dbReference type="InterPro" id="IPR003700">
    <property type="entry name" value="Pantoate_hydroxy_MeTrfase"/>
</dbReference>
<dbReference type="InterPro" id="IPR015813">
    <property type="entry name" value="Pyrv/PenolPyrv_kinase-like_dom"/>
</dbReference>
<dbReference type="InterPro" id="IPR040442">
    <property type="entry name" value="Pyrv_kinase-like_dom_sf"/>
</dbReference>
<dbReference type="NCBIfam" id="TIGR00222">
    <property type="entry name" value="panB"/>
    <property type="match status" value="1"/>
</dbReference>
<dbReference type="NCBIfam" id="NF001452">
    <property type="entry name" value="PRK00311.1"/>
    <property type="match status" value="1"/>
</dbReference>
<dbReference type="PANTHER" id="PTHR20881">
    <property type="entry name" value="3-METHYL-2-OXOBUTANOATE HYDROXYMETHYLTRANSFERASE"/>
    <property type="match status" value="1"/>
</dbReference>
<dbReference type="PANTHER" id="PTHR20881:SF0">
    <property type="entry name" value="3-METHYL-2-OXOBUTANOATE HYDROXYMETHYLTRANSFERASE"/>
    <property type="match status" value="1"/>
</dbReference>
<dbReference type="Pfam" id="PF02548">
    <property type="entry name" value="Pantoate_transf"/>
    <property type="match status" value="1"/>
</dbReference>
<dbReference type="PIRSF" id="PIRSF000388">
    <property type="entry name" value="Pantoate_hydroxy_MeTrfase"/>
    <property type="match status" value="1"/>
</dbReference>
<dbReference type="SUPFAM" id="SSF51621">
    <property type="entry name" value="Phosphoenolpyruvate/pyruvate domain"/>
    <property type="match status" value="1"/>
</dbReference>
<gene>
    <name evidence="1" type="primary">panB</name>
    <name type="ordered locus">BLi02378</name>
    <name type="ordered locus">BL02752</name>
</gene>
<feature type="chain" id="PRO_0000297220" description="3-methyl-2-oxobutanoate hydroxymethyltransferase">
    <location>
        <begin position="1"/>
        <end position="277"/>
    </location>
</feature>
<feature type="active site" description="Proton acceptor" evidence="1">
    <location>
        <position position="181"/>
    </location>
</feature>
<feature type="binding site" evidence="1">
    <location>
        <begin position="43"/>
        <end position="44"/>
    </location>
    <ligand>
        <name>3-methyl-2-oxobutanoate</name>
        <dbReference type="ChEBI" id="CHEBI:11851"/>
    </ligand>
</feature>
<feature type="binding site" evidence="1">
    <location>
        <position position="43"/>
    </location>
    <ligand>
        <name>Mg(2+)</name>
        <dbReference type="ChEBI" id="CHEBI:18420"/>
    </ligand>
</feature>
<feature type="binding site" evidence="1">
    <location>
        <position position="82"/>
    </location>
    <ligand>
        <name>3-methyl-2-oxobutanoate</name>
        <dbReference type="ChEBI" id="CHEBI:11851"/>
    </ligand>
</feature>
<feature type="binding site" evidence="1">
    <location>
        <position position="82"/>
    </location>
    <ligand>
        <name>Mg(2+)</name>
        <dbReference type="ChEBI" id="CHEBI:18420"/>
    </ligand>
</feature>
<feature type="binding site" evidence="1">
    <location>
        <position position="112"/>
    </location>
    <ligand>
        <name>3-methyl-2-oxobutanoate</name>
        <dbReference type="ChEBI" id="CHEBI:11851"/>
    </ligand>
</feature>
<feature type="binding site" evidence="1">
    <location>
        <position position="114"/>
    </location>
    <ligand>
        <name>Mg(2+)</name>
        <dbReference type="ChEBI" id="CHEBI:18420"/>
    </ligand>
</feature>
<keyword id="KW-0963">Cytoplasm</keyword>
<keyword id="KW-0460">Magnesium</keyword>
<keyword id="KW-0479">Metal-binding</keyword>
<keyword id="KW-0566">Pantothenate biosynthesis</keyword>
<keyword id="KW-1185">Reference proteome</keyword>
<keyword id="KW-0808">Transferase</keyword>